<keyword id="KW-0963">Cytoplasm</keyword>
<keyword id="KW-0378">Hydrolase</keyword>
<keyword id="KW-0479">Metal-binding</keyword>
<keyword id="KW-0547">Nucleotide-binding</keyword>
<keyword id="KW-1185">Reference proteome</keyword>
<comment type="function">
    <text evidence="1">Nucleotidase that shows phosphatase activity on nucleoside 5'-monophosphates.</text>
</comment>
<comment type="catalytic activity">
    <reaction evidence="1">
        <text>a ribonucleoside 5'-phosphate + H2O = a ribonucleoside + phosphate</text>
        <dbReference type="Rhea" id="RHEA:12484"/>
        <dbReference type="ChEBI" id="CHEBI:15377"/>
        <dbReference type="ChEBI" id="CHEBI:18254"/>
        <dbReference type="ChEBI" id="CHEBI:43474"/>
        <dbReference type="ChEBI" id="CHEBI:58043"/>
        <dbReference type="EC" id="3.1.3.5"/>
    </reaction>
</comment>
<comment type="cofactor">
    <cofactor evidence="1">
        <name>a divalent metal cation</name>
        <dbReference type="ChEBI" id="CHEBI:60240"/>
    </cofactor>
    <text evidence="1">Binds 1 divalent metal cation per subunit.</text>
</comment>
<comment type="subcellular location">
    <subcellularLocation>
        <location evidence="1">Cytoplasm</location>
    </subcellularLocation>
</comment>
<comment type="similarity">
    <text evidence="1">Belongs to the SurE nucleotidase family.</text>
</comment>
<accession>A3N3M1</accession>
<feature type="chain" id="PRO_1000007698" description="5'-nucleotidase SurE">
    <location>
        <begin position="1"/>
        <end position="254"/>
    </location>
</feature>
<feature type="binding site" evidence="1">
    <location>
        <position position="8"/>
    </location>
    <ligand>
        <name>a divalent metal cation</name>
        <dbReference type="ChEBI" id="CHEBI:60240"/>
    </ligand>
</feature>
<feature type="binding site" evidence="1">
    <location>
        <position position="9"/>
    </location>
    <ligand>
        <name>a divalent metal cation</name>
        <dbReference type="ChEBI" id="CHEBI:60240"/>
    </ligand>
</feature>
<feature type="binding site" evidence="1">
    <location>
        <position position="40"/>
    </location>
    <ligand>
        <name>a divalent metal cation</name>
        <dbReference type="ChEBI" id="CHEBI:60240"/>
    </ligand>
</feature>
<feature type="binding site" evidence="1">
    <location>
        <position position="93"/>
    </location>
    <ligand>
        <name>a divalent metal cation</name>
        <dbReference type="ChEBI" id="CHEBI:60240"/>
    </ligand>
</feature>
<proteinExistence type="inferred from homology"/>
<reference key="1">
    <citation type="journal article" date="2008" name="J. Bacteriol.">
        <title>The complete genome sequence of Actinobacillus pleuropneumoniae L20 (serotype 5b).</title>
        <authorList>
            <person name="Foote S.J."/>
            <person name="Bosse J.T."/>
            <person name="Bouevitch A.B."/>
            <person name="Langford P.R."/>
            <person name="Young N.M."/>
            <person name="Nash J.H.E."/>
        </authorList>
    </citation>
    <scope>NUCLEOTIDE SEQUENCE [LARGE SCALE GENOMIC DNA]</scope>
    <source>
        <strain>L20</strain>
    </source>
</reference>
<name>SURE_ACTP2</name>
<organism>
    <name type="scientific">Actinobacillus pleuropneumoniae serotype 5b (strain L20)</name>
    <dbReference type="NCBI Taxonomy" id="416269"/>
    <lineage>
        <taxon>Bacteria</taxon>
        <taxon>Pseudomonadati</taxon>
        <taxon>Pseudomonadota</taxon>
        <taxon>Gammaproteobacteria</taxon>
        <taxon>Pasteurellales</taxon>
        <taxon>Pasteurellaceae</taxon>
        <taxon>Actinobacillus</taxon>
    </lineage>
</organism>
<sequence>MNILISNDDGYHAQGIQTLAETLRDAGHSVTVIAPDRNRSAASSCLTLMEPIRVHQLDEFNYAVIAGTPADCVHLALNGFFEQSFDLVISGINHGANLGDDVVYSGTVAAALEGRHLPYPSLAISLVGRKSEGHLFGNNHFDTAAKVVLDLLPKVQKGIVPARQILNINVPDLPYEQVKGVMITRLGHRSPAAEIVKREDPRGATIYWLGANGVPVDASEGTDFYALAHNYVSVTPIQADMTAHYSIQALKDTF</sequence>
<dbReference type="EC" id="3.1.3.5" evidence="1"/>
<dbReference type="EMBL" id="CP000569">
    <property type="protein sequence ID" value="ABN75007.1"/>
    <property type="molecule type" value="Genomic_DNA"/>
</dbReference>
<dbReference type="RefSeq" id="WP_005599676.1">
    <property type="nucleotide sequence ID" value="NC_009053.1"/>
</dbReference>
<dbReference type="SMR" id="A3N3M1"/>
<dbReference type="STRING" id="416269.APL_1927"/>
<dbReference type="EnsemblBacteria" id="ABN75007">
    <property type="protein sequence ID" value="ABN75007"/>
    <property type="gene ID" value="APL_1927"/>
</dbReference>
<dbReference type="GeneID" id="48600232"/>
<dbReference type="KEGG" id="apl:APL_1927"/>
<dbReference type="eggNOG" id="COG0496">
    <property type="taxonomic scope" value="Bacteria"/>
</dbReference>
<dbReference type="HOGENOM" id="CLU_045192_1_2_6"/>
<dbReference type="Proteomes" id="UP000001432">
    <property type="component" value="Chromosome"/>
</dbReference>
<dbReference type="GO" id="GO:0005737">
    <property type="term" value="C:cytoplasm"/>
    <property type="evidence" value="ECO:0007669"/>
    <property type="project" value="UniProtKB-SubCell"/>
</dbReference>
<dbReference type="GO" id="GO:0008254">
    <property type="term" value="F:3'-nucleotidase activity"/>
    <property type="evidence" value="ECO:0007669"/>
    <property type="project" value="TreeGrafter"/>
</dbReference>
<dbReference type="GO" id="GO:0008253">
    <property type="term" value="F:5'-nucleotidase activity"/>
    <property type="evidence" value="ECO:0007669"/>
    <property type="project" value="UniProtKB-UniRule"/>
</dbReference>
<dbReference type="GO" id="GO:0004309">
    <property type="term" value="F:exopolyphosphatase activity"/>
    <property type="evidence" value="ECO:0007669"/>
    <property type="project" value="TreeGrafter"/>
</dbReference>
<dbReference type="GO" id="GO:0046872">
    <property type="term" value="F:metal ion binding"/>
    <property type="evidence" value="ECO:0007669"/>
    <property type="project" value="UniProtKB-UniRule"/>
</dbReference>
<dbReference type="GO" id="GO:0000166">
    <property type="term" value="F:nucleotide binding"/>
    <property type="evidence" value="ECO:0007669"/>
    <property type="project" value="UniProtKB-KW"/>
</dbReference>
<dbReference type="FunFam" id="3.40.1210.10:FF:000001">
    <property type="entry name" value="5'/3'-nucleotidase SurE"/>
    <property type="match status" value="1"/>
</dbReference>
<dbReference type="Gene3D" id="3.40.1210.10">
    <property type="entry name" value="Survival protein SurE-like phosphatase/nucleotidase"/>
    <property type="match status" value="1"/>
</dbReference>
<dbReference type="HAMAP" id="MF_00060">
    <property type="entry name" value="SurE"/>
    <property type="match status" value="1"/>
</dbReference>
<dbReference type="InterPro" id="IPR030048">
    <property type="entry name" value="SurE"/>
</dbReference>
<dbReference type="InterPro" id="IPR002828">
    <property type="entry name" value="SurE-like_Pase/nucleotidase"/>
</dbReference>
<dbReference type="InterPro" id="IPR036523">
    <property type="entry name" value="SurE-like_sf"/>
</dbReference>
<dbReference type="NCBIfam" id="NF001489">
    <property type="entry name" value="PRK00346.1-3"/>
    <property type="match status" value="1"/>
</dbReference>
<dbReference type="NCBIfam" id="NF001490">
    <property type="entry name" value="PRK00346.1-4"/>
    <property type="match status" value="1"/>
</dbReference>
<dbReference type="NCBIfam" id="TIGR00087">
    <property type="entry name" value="surE"/>
    <property type="match status" value="1"/>
</dbReference>
<dbReference type="PANTHER" id="PTHR30457">
    <property type="entry name" value="5'-NUCLEOTIDASE SURE"/>
    <property type="match status" value="1"/>
</dbReference>
<dbReference type="PANTHER" id="PTHR30457:SF12">
    <property type="entry name" value="5'_3'-NUCLEOTIDASE SURE"/>
    <property type="match status" value="1"/>
</dbReference>
<dbReference type="Pfam" id="PF01975">
    <property type="entry name" value="SurE"/>
    <property type="match status" value="1"/>
</dbReference>
<dbReference type="SUPFAM" id="SSF64167">
    <property type="entry name" value="SurE-like"/>
    <property type="match status" value="1"/>
</dbReference>
<gene>
    <name evidence="1" type="primary">surE</name>
    <name type="ordered locus">APL_1927</name>
</gene>
<protein>
    <recommendedName>
        <fullName evidence="1">5'-nucleotidase SurE</fullName>
        <ecNumber evidence="1">3.1.3.5</ecNumber>
    </recommendedName>
    <alternativeName>
        <fullName evidence="1">Nucleoside 5'-monophosphate phosphohydrolase</fullName>
    </alternativeName>
</protein>
<evidence type="ECO:0000255" key="1">
    <source>
        <dbReference type="HAMAP-Rule" id="MF_00060"/>
    </source>
</evidence>